<feature type="chain" id="PRO_1000117063" description="Ribosomal RNA small subunit methyltransferase G">
    <location>
        <begin position="1"/>
        <end position="239"/>
    </location>
</feature>
<feature type="binding site" evidence="1">
    <location>
        <position position="77"/>
    </location>
    <ligand>
        <name>S-adenosyl-L-methionine</name>
        <dbReference type="ChEBI" id="CHEBI:59789"/>
    </ligand>
</feature>
<feature type="binding site" evidence="1">
    <location>
        <position position="82"/>
    </location>
    <ligand>
        <name>S-adenosyl-L-methionine</name>
        <dbReference type="ChEBI" id="CHEBI:59789"/>
    </ligand>
</feature>
<feature type="binding site" evidence="1">
    <location>
        <begin position="128"/>
        <end position="129"/>
    </location>
    <ligand>
        <name>S-adenosyl-L-methionine</name>
        <dbReference type="ChEBI" id="CHEBI:59789"/>
    </ligand>
</feature>
<feature type="binding site" evidence="1">
    <location>
        <position position="147"/>
    </location>
    <ligand>
        <name>S-adenosyl-L-methionine</name>
        <dbReference type="ChEBI" id="CHEBI:59789"/>
    </ligand>
</feature>
<evidence type="ECO:0000255" key="1">
    <source>
        <dbReference type="HAMAP-Rule" id="MF_00074"/>
    </source>
</evidence>
<proteinExistence type="inferred from homology"/>
<dbReference type="EC" id="2.1.1.-" evidence="1"/>
<dbReference type="EMBL" id="CP001176">
    <property type="protein sequence ID" value="ACK60665.1"/>
    <property type="molecule type" value="Genomic_DNA"/>
</dbReference>
<dbReference type="RefSeq" id="WP_001019628.1">
    <property type="nucleotide sequence ID" value="NZ_VEHB01000004.1"/>
</dbReference>
<dbReference type="SMR" id="B7H7A0"/>
<dbReference type="GeneID" id="92885935"/>
<dbReference type="KEGG" id="bcb:BCB4264_A5609"/>
<dbReference type="HOGENOM" id="CLU_065341_0_2_9"/>
<dbReference type="Proteomes" id="UP000007096">
    <property type="component" value="Chromosome"/>
</dbReference>
<dbReference type="GO" id="GO:0005829">
    <property type="term" value="C:cytosol"/>
    <property type="evidence" value="ECO:0007669"/>
    <property type="project" value="TreeGrafter"/>
</dbReference>
<dbReference type="GO" id="GO:0070043">
    <property type="term" value="F:rRNA (guanine-N7-)-methyltransferase activity"/>
    <property type="evidence" value="ECO:0007669"/>
    <property type="project" value="UniProtKB-UniRule"/>
</dbReference>
<dbReference type="CDD" id="cd02440">
    <property type="entry name" value="AdoMet_MTases"/>
    <property type="match status" value="1"/>
</dbReference>
<dbReference type="FunFam" id="3.40.50.150:FF:000041">
    <property type="entry name" value="Ribosomal RNA small subunit methyltransferase G"/>
    <property type="match status" value="1"/>
</dbReference>
<dbReference type="Gene3D" id="3.40.50.150">
    <property type="entry name" value="Vaccinia Virus protein VP39"/>
    <property type="match status" value="1"/>
</dbReference>
<dbReference type="HAMAP" id="MF_00074">
    <property type="entry name" value="16SrRNA_methyltr_G"/>
    <property type="match status" value="1"/>
</dbReference>
<dbReference type="InterPro" id="IPR003682">
    <property type="entry name" value="rRNA_ssu_MeTfrase_G"/>
</dbReference>
<dbReference type="InterPro" id="IPR029063">
    <property type="entry name" value="SAM-dependent_MTases_sf"/>
</dbReference>
<dbReference type="NCBIfam" id="TIGR00138">
    <property type="entry name" value="rsmG_gidB"/>
    <property type="match status" value="1"/>
</dbReference>
<dbReference type="PANTHER" id="PTHR31760">
    <property type="entry name" value="S-ADENOSYL-L-METHIONINE-DEPENDENT METHYLTRANSFERASES SUPERFAMILY PROTEIN"/>
    <property type="match status" value="1"/>
</dbReference>
<dbReference type="PANTHER" id="PTHR31760:SF0">
    <property type="entry name" value="S-ADENOSYL-L-METHIONINE-DEPENDENT METHYLTRANSFERASES SUPERFAMILY PROTEIN"/>
    <property type="match status" value="1"/>
</dbReference>
<dbReference type="Pfam" id="PF02527">
    <property type="entry name" value="GidB"/>
    <property type="match status" value="1"/>
</dbReference>
<dbReference type="PIRSF" id="PIRSF003078">
    <property type="entry name" value="GidB"/>
    <property type="match status" value="1"/>
</dbReference>
<dbReference type="SUPFAM" id="SSF53335">
    <property type="entry name" value="S-adenosyl-L-methionine-dependent methyltransferases"/>
    <property type="match status" value="1"/>
</dbReference>
<comment type="function">
    <text evidence="1">Specifically methylates the N7 position of guanine in position 535 of 16S rRNA.</text>
</comment>
<comment type="subcellular location">
    <subcellularLocation>
        <location evidence="1">Cytoplasm</location>
    </subcellularLocation>
</comment>
<comment type="similarity">
    <text evidence="1">Belongs to the methyltransferase superfamily. RNA methyltransferase RsmG family.</text>
</comment>
<name>RSMG_BACC4</name>
<protein>
    <recommendedName>
        <fullName evidence="1">Ribosomal RNA small subunit methyltransferase G</fullName>
        <ecNumber evidence="1">2.1.1.-</ecNumber>
    </recommendedName>
    <alternativeName>
        <fullName evidence="1">16S rRNA 7-methylguanosine methyltransferase</fullName>
        <shortName evidence="1">16S rRNA m7G methyltransferase</shortName>
    </alternativeName>
</protein>
<gene>
    <name evidence="1" type="primary">rsmG</name>
    <name type="ordered locus">BCB4264_A5609</name>
</gene>
<reference key="1">
    <citation type="submission" date="2008-10" db="EMBL/GenBank/DDBJ databases">
        <title>Genome sequence of Bacillus cereus B4264.</title>
        <authorList>
            <person name="Dodson R.J."/>
            <person name="Durkin A.S."/>
            <person name="Rosovitz M.J."/>
            <person name="Rasko D.A."/>
            <person name="Hoffmaster A."/>
            <person name="Ravel J."/>
            <person name="Sutton G."/>
        </authorList>
    </citation>
    <scope>NUCLEOTIDE SEQUENCE [LARGE SCALE GENOMIC DNA]</scope>
    <source>
        <strain>B4264</strain>
    </source>
</reference>
<accession>B7H7A0</accession>
<sequence length="239" mass="27225">MNIEQFQSMLEEKGITLSSRQLEQFKIYFETLVEWNEKMNLTAITEKEEVYLKHFFDSITAAFYYDFSKPFSICDVGAGAGFPSIPLKICFPHLKVTIVDSLQKRINFLNHLAQKLELSDVAFCHDRAETFGKKEGVRESYDIVMARAVARLSVLSELCLPLVKVGGTFIAMKGAAANEEIENGKYALEVLGGELKEMSTFQLPFEESERNILLIEKKRKTPKKYPRKPGTPNKLPIEK</sequence>
<keyword id="KW-0963">Cytoplasm</keyword>
<keyword id="KW-0489">Methyltransferase</keyword>
<keyword id="KW-0698">rRNA processing</keyword>
<keyword id="KW-0949">S-adenosyl-L-methionine</keyword>
<keyword id="KW-0808">Transferase</keyword>
<organism>
    <name type="scientific">Bacillus cereus (strain B4264)</name>
    <dbReference type="NCBI Taxonomy" id="405532"/>
    <lineage>
        <taxon>Bacteria</taxon>
        <taxon>Bacillati</taxon>
        <taxon>Bacillota</taxon>
        <taxon>Bacilli</taxon>
        <taxon>Bacillales</taxon>
        <taxon>Bacillaceae</taxon>
        <taxon>Bacillus</taxon>
        <taxon>Bacillus cereus group</taxon>
    </lineage>
</organism>